<reference key="1">
    <citation type="journal article" date="2000" name="Plant J.">
        <title>Interactions of the developmental regulator ABI3 with proteins identified from developing Arabidopsis seeds.</title>
        <authorList>
            <person name="Kurup S."/>
            <person name="Jones H.D."/>
            <person name="Holdsworth M.J."/>
        </authorList>
    </citation>
    <scope>NUCLEOTIDE SEQUENCE [MRNA]</scope>
    <scope>INTERACTION WITH ABI3</scope>
    <scope>TISSUE SPECIFICITY</scope>
    <source>
        <strain>cv. Landsberg erecta</strain>
        <tissue>Silique</tissue>
    </source>
</reference>
<reference key="2">
    <citation type="journal article" date="2005" name="Plant Physiol.">
        <title>Functional analysis of the RING-type ubiquitin ligase family of Arabidopsis.</title>
        <authorList>
            <person name="Stone S.L."/>
            <person name="Hauksdottir H."/>
            <person name="Troy A."/>
            <person name="Herschleb J."/>
            <person name="Kraft E."/>
            <person name="Callis J."/>
        </authorList>
    </citation>
    <scope>NUCLEOTIDE SEQUENCE [MRNA]</scope>
    <scope>FUNCTION</scope>
    <scope>CATALYTIC ACTIVITY</scope>
    <source>
        <strain>cv. Columbia</strain>
        <tissue>Leaf</tissue>
    </source>
</reference>
<reference key="3">
    <citation type="journal article" date="2000" name="Nature">
        <title>Sequence and analysis of chromosome 5 of the plant Arabidopsis thaliana.</title>
        <authorList>
            <person name="Tabata S."/>
            <person name="Kaneko T."/>
            <person name="Nakamura Y."/>
            <person name="Kotani H."/>
            <person name="Kato T."/>
            <person name="Asamizu E."/>
            <person name="Miyajima N."/>
            <person name="Sasamoto S."/>
            <person name="Kimura T."/>
            <person name="Hosouchi T."/>
            <person name="Kawashima K."/>
            <person name="Kohara M."/>
            <person name="Matsumoto M."/>
            <person name="Matsuno A."/>
            <person name="Muraki A."/>
            <person name="Nakayama S."/>
            <person name="Nakazaki N."/>
            <person name="Naruo K."/>
            <person name="Okumura S."/>
            <person name="Shinpo S."/>
            <person name="Takeuchi C."/>
            <person name="Wada T."/>
            <person name="Watanabe A."/>
            <person name="Yamada M."/>
            <person name="Yasuda M."/>
            <person name="Sato S."/>
            <person name="de la Bastide M."/>
            <person name="Huang E."/>
            <person name="Spiegel L."/>
            <person name="Gnoj L."/>
            <person name="O'Shaughnessy A."/>
            <person name="Preston R."/>
            <person name="Habermann K."/>
            <person name="Murray J."/>
            <person name="Johnson D."/>
            <person name="Rohlfing T."/>
            <person name="Nelson J."/>
            <person name="Stoneking T."/>
            <person name="Pepin K."/>
            <person name="Spieth J."/>
            <person name="Sekhon M."/>
            <person name="Armstrong J."/>
            <person name="Becker M."/>
            <person name="Belter E."/>
            <person name="Cordum H."/>
            <person name="Cordes M."/>
            <person name="Courtney L."/>
            <person name="Courtney W."/>
            <person name="Dante M."/>
            <person name="Du H."/>
            <person name="Edwards J."/>
            <person name="Fryman J."/>
            <person name="Haakensen B."/>
            <person name="Lamar E."/>
            <person name="Latreille P."/>
            <person name="Leonard S."/>
            <person name="Meyer R."/>
            <person name="Mulvaney E."/>
            <person name="Ozersky P."/>
            <person name="Riley A."/>
            <person name="Strowmatt C."/>
            <person name="Wagner-McPherson C."/>
            <person name="Wollam A."/>
            <person name="Yoakum M."/>
            <person name="Bell M."/>
            <person name="Dedhia N."/>
            <person name="Parnell L."/>
            <person name="Shah R."/>
            <person name="Rodriguez M."/>
            <person name="Hoon See L."/>
            <person name="Vil D."/>
            <person name="Baker J."/>
            <person name="Kirchoff K."/>
            <person name="Toth K."/>
            <person name="King L."/>
            <person name="Bahret A."/>
            <person name="Miller B."/>
            <person name="Marra M.A."/>
            <person name="Martienssen R."/>
            <person name="McCombie W.R."/>
            <person name="Wilson R.K."/>
            <person name="Murphy G."/>
            <person name="Bancroft I."/>
            <person name="Volckaert G."/>
            <person name="Wambutt R."/>
            <person name="Duesterhoeft A."/>
            <person name="Stiekema W."/>
            <person name="Pohl T."/>
            <person name="Entian K.-D."/>
            <person name="Terryn N."/>
            <person name="Hartley N."/>
            <person name="Bent E."/>
            <person name="Johnson S."/>
            <person name="Langham S.-A."/>
            <person name="McCullagh B."/>
            <person name="Robben J."/>
            <person name="Grymonprez B."/>
            <person name="Zimmermann W."/>
            <person name="Ramsperger U."/>
            <person name="Wedler H."/>
            <person name="Balke K."/>
            <person name="Wedler E."/>
            <person name="Peters S."/>
            <person name="van Staveren M."/>
            <person name="Dirkse W."/>
            <person name="Mooijman P."/>
            <person name="Klein Lankhorst R."/>
            <person name="Weitzenegger T."/>
            <person name="Bothe G."/>
            <person name="Rose M."/>
            <person name="Hauf J."/>
            <person name="Berneiser S."/>
            <person name="Hempel S."/>
            <person name="Feldpausch M."/>
            <person name="Lamberth S."/>
            <person name="Villarroel R."/>
            <person name="Gielen J."/>
            <person name="Ardiles W."/>
            <person name="Bents O."/>
            <person name="Lemcke K."/>
            <person name="Kolesov G."/>
            <person name="Mayer K.F.X."/>
            <person name="Rudd S."/>
            <person name="Schoof H."/>
            <person name="Schueller C."/>
            <person name="Zaccaria P."/>
            <person name="Mewes H.-W."/>
            <person name="Bevan M."/>
            <person name="Fransz P.F."/>
        </authorList>
    </citation>
    <scope>NUCLEOTIDE SEQUENCE [LARGE SCALE GENOMIC DNA]</scope>
    <source>
        <strain>cv. Columbia</strain>
    </source>
</reference>
<reference key="4">
    <citation type="journal article" date="2017" name="Plant J.">
        <title>Araport11: a complete reannotation of the Arabidopsis thaliana reference genome.</title>
        <authorList>
            <person name="Cheng C.Y."/>
            <person name="Krishnakumar V."/>
            <person name="Chan A.P."/>
            <person name="Thibaud-Nissen F."/>
            <person name="Schobel S."/>
            <person name="Town C.D."/>
        </authorList>
    </citation>
    <scope>GENOME REANNOTATION</scope>
    <source>
        <strain>cv. Columbia</strain>
    </source>
</reference>
<reference key="5">
    <citation type="journal article" date="2003" name="Science">
        <title>Empirical analysis of transcriptional activity in the Arabidopsis genome.</title>
        <authorList>
            <person name="Yamada K."/>
            <person name="Lim J."/>
            <person name="Dale J.M."/>
            <person name="Chen H."/>
            <person name="Shinn P."/>
            <person name="Palm C.J."/>
            <person name="Southwick A.M."/>
            <person name="Wu H.C."/>
            <person name="Kim C.J."/>
            <person name="Nguyen M."/>
            <person name="Pham P.K."/>
            <person name="Cheuk R.F."/>
            <person name="Karlin-Newmann G."/>
            <person name="Liu S.X."/>
            <person name="Lam B."/>
            <person name="Sakano H."/>
            <person name="Wu T."/>
            <person name="Yu G."/>
            <person name="Miranda M."/>
            <person name="Quach H.L."/>
            <person name="Tripp M."/>
            <person name="Chang C.H."/>
            <person name="Lee J.M."/>
            <person name="Toriumi M.J."/>
            <person name="Chan M.M."/>
            <person name="Tang C.C."/>
            <person name="Onodera C.S."/>
            <person name="Deng J.M."/>
            <person name="Akiyama K."/>
            <person name="Ansari Y."/>
            <person name="Arakawa T."/>
            <person name="Banh J."/>
            <person name="Banno F."/>
            <person name="Bowser L."/>
            <person name="Brooks S.Y."/>
            <person name="Carninci P."/>
            <person name="Chao Q."/>
            <person name="Choy N."/>
            <person name="Enju A."/>
            <person name="Goldsmith A.D."/>
            <person name="Gurjal M."/>
            <person name="Hansen N.F."/>
            <person name="Hayashizaki Y."/>
            <person name="Johnson-Hopson C."/>
            <person name="Hsuan V.W."/>
            <person name="Iida K."/>
            <person name="Karnes M."/>
            <person name="Khan S."/>
            <person name="Koesema E."/>
            <person name="Ishida J."/>
            <person name="Jiang P.X."/>
            <person name="Jones T."/>
            <person name="Kawai J."/>
            <person name="Kamiya A."/>
            <person name="Meyers C."/>
            <person name="Nakajima M."/>
            <person name="Narusaka M."/>
            <person name="Seki M."/>
            <person name="Sakurai T."/>
            <person name="Satou M."/>
            <person name="Tamse R."/>
            <person name="Vaysberg M."/>
            <person name="Wallender E.K."/>
            <person name="Wong C."/>
            <person name="Yamamura Y."/>
            <person name="Yuan S."/>
            <person name="Shinozaki K."/>
            <person name="Davis R.W."/>
            <person name="Theologis A."/>
            <person name="Ecker J.R."/>
        </authorList>
    </citation>
    <scope>NUCLEOTIDE SEQUENCE [LARGE SCALE MRNA]</scope>
    <source>
        <strain>cv. Columbia</strain>
    </source>
</reference>
<reference key="6">
    <citation type="journal article" date="2005" name="Genes Dev.">
        <title>The AIP2 E3 ligase acts as a novel negative regulator of ABA signaling by promoting ABI3 degradation.</title>
        <authorList>
            <person name="Zhang X."/>
            <person name="Garreton V."/>
            <person name="Chua N.H."/>
        </authorList>
    </citation>
    <scope>FUNCTION</scope>
    <scope>INTERACTION WITH ABI3</scope>
    <scope>SUBCELLULAR LOCATION</scope>
    <scope>AUTOUBIQUITINATION</scope>
    <scope>DISRUPTION PHENOTYPE</scope>
    <scope>MUTAGENESIS OF CYS-230 AND CYS-231</scope>
</reference>
<comment type="function">
    <text evidence="5 6">E3 ubiquitin-protein ligase that acts as a negative regulator of abscisic acid (ABA) signaling. Mediates ubiquitination and subsequent proteasomal degradation of the transcription factor ABI3.</text>
</comment>
<comment type="catalytic activity">
    <reaction evidence="5">
        <text>S-ubiquitinyl-[E2 ubiquitin-conjugating enzyme]-L-cysteine + [acceptor protein]-L-lysine = [E2 ubiquitin-conjugating enzyme]-L-cysteine + N(6)-ubiquitinyl-[acceptor protein]-L-lysine.</text>
        <dbReference type="EC" id="2.3.2.27"/>
    </reaction>
</comment>
<comment type="pathway">
    <text>Protein modification; protein ubiquitination.</text>
</comment>
<comment type="subunit">
    <text evidence="4 6">Interacts with ABI3 (via C-terminus).</text>
</comment>
<comment type="interaction">
    <interactant intactId="EBI-2312425">
        <id>Q8RXD3</id>
    </interactant>
    <interactant intactId="EBI-1578892">
        <id>Q01593</id>
        <label>ABI3</label>
    </interactant>
    <organismsDiffer>false</organismsDiffer>
    <experiments>3</experiments>
</comment>
<comment type="subcellular location">
    <subcellularLocation>
        <location evidence="6">Nucleus</location>
    </subcellularLocation>
    <subcellularLocation>
        <location evidence="6">Cytoplasm</location>
    </subcellularLocation>
</comment>
<comment type="tissue specificity">
    <text evidence="4">Highly expressed in leaves and at lower levels in flowers and seeds.</text>
</comment>
<comment type="PTM">
    <text evidence="6">Auto-ubiquitinated.</text>
</comment>
<comment type="disruption phenotype">
    <text evidence="6">Hypersensitivity to abscisic acid (ABA).</text>
</comment>
<name>AIP2_ARATH</name>
<keyword id="KW-0938">Abscisic acid signaling pathway</keyword>
<keyword id="KW-0175">Coiled coil</keyword>
<keyword id="KW-0963">Cytoplasm</keyword>
<keyword id="KW-0479">Metal-binding</keyword>
<keyword id="KW-0539">Nucleus</keyword>
<keyword id="KW-1185">Reference proteome</keyword>
<keyword id="KW-0808">Transferase</keyword>
<keyword id="KW-0832">Ubl conjugation</keyword>
<keyword id="KW-0833">Ubl conjugation pathway</keyword>
<keyword id="KW-0862">Zinc</keyword>
<keyword id="KW-0863">Zinc-finger</keyword>
<feature type="chain" id="PRO_0000395844" description="E3 ubiquitin-protein ligase AIP2">
    <location>
        <begin position="1"/>
        <end position="310"/>
    </location>
</feature>
<feature type="zinc finger region" description="RING-type; atypical" evidence="2">
    <location>
        <begin position="230"/>
        <end position="271"/>
    </location>
</feature>
<feature type="region of interest" description="Disordered" evidence="3">
    <location>
        <begin position="285"/>
        <end position="310"/>
    </location>
</feature>
<feature type="coiled-coil region" evidence="1">
    <location>
        <begin position="276"/>
        <end position="306"/>
    </location>
</feature>
<feature type="compositionally biased region" description="Basic and acidic residues" evidence="3">
    <location>
        <begin position="285"/>
        <end position="298"/>
    </location>
</feature>
<feature type="mutagenesis site" description="Loss of E3 ubiquitin ligase activity." evidence="6">
    <original>C</original>
    <variation>S</variation>
    <location>
        <position position="230"/>
    </location>
</feature>
<feature type="mutagenesis site" description="Loss of E3 ubiquitin ligase activity." evidence="6">
    <original>C</original>
    <variation>S</variation>
    <location>
        <position position="231"/>
    </location>
</feature>
<feature type="sequence conflict" description="In Ref. 1; CAB75509." evidence="7" ref="1">
    <original>D</original>
    <variation>A</variation>
    <location>
        <position position="277"/>
    </location>
</feature>
<organism>
    <name type="scientific">Arabidopsis thaliana</name>
    <name type="common">Mouse-ear cress</name>
    <dbReference type="NCBI Taxonomy" id="3702"/>
    <lineage>
        <taxon>Eukaryota</taxon>
        <taxon>Viridiplantae</taxon>
        <taxon>Streptophyta</taxon>
        <taxon>Embryophyta</taxon>
        <taxon>Tracheophyta</taxon>
        <taxon>Spermatophyta</taxon>
        <taxon>Magnoliopsida</taxon>
        <taxon>eudicotyledons</taxon>
        <taxon>Gunneridae</taxon>
        <taxon>Pentapetalae</taxon>
        <taxon>rosids</taxon>
        <taxon>malvids</taxon>
        <taxon>Brassicales</taxon>
        <taxon>Brassicaceae</taxon>
        <taxon>Camelineae</taxon>
        <taxon>Arabidopsis</taxon>
    </lineage>
</organism>
<protein>
    <recommendedName>
        <fullName>E3 ubiquitin-protein ligase AIP2</fullName>
        <ecNumber evidence="5">2.3.2.27</ecNumber>
    </recommendedName>
    <alternativeName>
        <fullName>ABI3-interacting protein 2</fullName>
    </alternativeName>
    <alternativeName>
        <fullName evidence="7">RING-type E3 ubiquitin transferase AIP2</fullName>
    </alternativeName>
</protein>
<sequence length="310" mass="34807">MDASSSPSPSEESLKLELDDLQKQLNKKLRFEASVCSIHNLLRDHYSSSSPSLRKQFYIVVSRVATVLKTRYTATGFWVAGLSLFEEAERLVSDASEKKHLKSCVAQAKEQLSEVDNQPTESSQGYLFEGHLTVDREPPQPQWLVQQNLMSAFASIVGGESSNGPTENTIGETANLMQELINGLDMIIPDILDDGGPPRAPPASKEVVEKLPVIIFTEELLKKFGAEAECCICKENLVIGDKMQELPCKHTFHPPCLKPWLDEHNSCPICRHELPTDDQKYENWKEREKEAEEERKGAENAVRGGEYMYV</sequence>
<dbReference type="EC" id="2.3.2.27" evidence="5"/>
<dbReference type="EMBL" id="AJ251087">
    <property type="protein sequence ID" value="CAB75509.1"/>
    <property type="molecule type" value="mRNA"/>
</dbReference>
<dbReference type="EMBL" id="DQ059130">
    <property type="protein sequence ID" value="AAY57616.1"/>
    <property type="molecule type" value="mRNA"/>
</dbReference>
<dbReference type="EMBL" id="AF296834">
    <property type="status" value="NOT_ANNOTATED_CDS"/>
    <property type="molecule type" value="Genomic_DNA"/>
</dbReference>
<dbReference type="EMBL" id="CP002688">
    <property type="protein sequence ID" value="AED92903.1"/>
    <property type="molecule type" value="Genomic_DNA"/>
</dbReference>
<dbReference type="EMBL" id="AY081329">
    <property type="protein sequence ID" value="AAL91218.1"/>
    <property type="molecule type" value="mRNA"/>
</dbReference>
<dbReference type="EMBL" id="BT000238">
    <property type="protein sequence ID" value="AAN15557.1"/>
    <property type="molecule type" value="mRNA"/>
</dbReference>
<dbReference type="RefSeq" id="NP_197591.1">
    <property type="nucleotide sequence ID" value="NM_122099.4"/>
</dbReference>
<dbReference type="SMR" id="Q8RXD3"/>
<dbReference type="BioGRID" id="17490">
    <property type="interactions" value="1"/>
</dbReference>
<dbReference type="FunCoup" id="Q8RXD3">
    <property type="interactions" value="679"/>
</dbReference>
<dbReference type="IntAct" id="Q8RXD3">
    <property type="interactions" value="1"/>
</dbReference>
<dbReference type="STRING" id="3702.Q8RXD3"/>
<dbReference type="PaxDb" id="3702-AT5G20910.1"/>
<dbReference type="ProteomicsDB" id="244784"/>
<dbReference type="EnsemblPlants" id="AT5G20910.1">
    <property type="protein sequence ID" value="AT5G20910.1"/>
    <property type="gene ID" value="AT5G20910"/>
</dbReference>
<dbReference type="GeneID" id="832215"/>
<dbReference type="Gramene" id="AT5G20910.1">
    <property type="protein sequence ID" value="AT5G20910.1"/>
    <property type="gene ID" value="AT5G20910"/>
</dbReference>
<dbReference type="KEGG" id="ath:AT5G20910"/>
<dbReference type="Araport" id="AT5G20910"/>
<dbReference type="TAIR" id="AT5G20910">
    <property type="gene designation" value="AIP2"/>
</dbReference>
<dbReference type="eggNOG" id="KOG0800">
    <property type="taxonomic scope" value="Eukaryota"/>
</dbReference>
<dbReference type="HOGENOM" id="CLU_048503_0_0_1"/>
<dbReference type="InParanoid" id="Q8RXD3"/>
<dbReference type="OMA" id="YSVICRV"/>
<dbReference type="OrthoDB" id="8062037at2759"/>
<dbReference type="PhylomeDB" id="Q8RXD3"/>
<dbReference type="UniPathway" id="UPA00143"/>
<dbReference type="PRO" id="PR:Q8RXD3"/>
<dbReference type="Proteomes" id="UP000006548">
    <property type="component" value="Chromosome 5"/>
</dbReference>
<dbReference type="ExpressionAtlas" id="Q8RXD3">
    <property type="expression patterns" value="baseline and differential"/>
</dbReference>
<dbReference type="GO" id="GO:0005829">
    <property type="term" value="C:cytosol"/>
    <property type="evidence" value="ECO:0000314"/>
    <property type="project" value="UniProtKB"/>
</dbReference>
<dbReference type="GO" id="GO:0005634">
    <property type="term" value="C:nucleus"/>
    <property type="evidence" value="ECO:0000314"/>
    <property type="project" value="UniProtKB"/>
</dbReference>
<dbReference type="GO" id="GO:0004842">
    <property type="term" value="F:ubiquitin-protein transferase activity"/>
    <property type="evidence" value="ECO:0000314"/>
    <property type="project" value="UniProtKB"/>
</dbReference>
<dbReference type="GO" id="GO:0008270">
    <property type="term" value="F:zinc ion binding"/>
    <property type="evidence" value="ECO:0007669"/>
    <property type="project" value="UniProtKB-KW"/>
</dbReference>
<dbReference type="GO" id="GO:0009738">
    <property type="term" value="P:abscisic acid-activated signaling pathway"/>
    <property type="evidence" value="ECO:0007669"/>
    <property type="project" value="UniProtKB-KW"/>
</dbReference>
<dbReference type="GO" id="GO:0009788">
    <property type="term" value="P:negative regulation of abscisic acid-activated signaling pathway"/>
    <property type="evidence" value="ECO:0000315"/>
    <property type="project" value="UniProtKB"/>
</dbReference>
<dbReference type="GO" id="GO:0016567">
    <property type="term" value="P:protein ubiquitination"/>
    <property type="evidence" value="ECO:0000314"/>
    <property type="project" value="UniProtKB"/>
</dbReference>
<dbReference type="GO" id="GO:0009737">
    <property type="term" value="P:response to abscisic acid"/>
    <property type="evidence" value="ECO:0000270"/>
    <property type="project" value="TAIR"/>
</dbReference>
<dbReference type="CDD" id="cd16667">
    <property type="entry name" value="RING-H2_RNF126-like"/>
    <property type="match status" value="1"/>
</dbReference>
<dbReference type="FunFam" id="3.30.40.10:FF:000127">
    <property type="entry name" value="E3 ubiquitin-protein ligase RNF181"/>
    <property type="match status" value="1"/>
</dbReference>
<dbReference type="Gene3D" id="3.30.40.10">
    <property type="entry name" value="Zinc/RING finger domain, C3HC4 (zinc finger)"/>
    <property type="match status" value="1"/>
</dbReference>
<dbReference type="InterPro" id="IPR001841">
    <property type="entry name" value="Znf_RING"/>
</dbReference>
<dbReference type="InterPro" id="IPR013083">
    <property type="entry name" value="Znf_RING/FYVE/PHD"/>
</dbReference>
<dbReference type="PANTHER" id="PTHR15710:SF4">
    <property type="entry name" value="E3 UBIQUITIN-PROTEIN LIGASE AIP2"/>
    <property type="match status" value="1"/>
</dbReference>
<dbReference type="PANTHER" id="PTHR15710">
    <property type="entry name" value="E3 UBIQUITIN-PROTEIN LIGASE PRAJA"/>
    <property type="match status" value="1"/>
</dbReference>
<dbReference type="Pfam" id="PF13639">
    <property type="entry name" value="zf-RING_2"/>
    <property type="match status" value="1"/>
</dbReference>
<dbReference type="SMART" id="SM00184">
    <property type="entry name" value="RING"/>
    <property type="match status" value="1"/>
</dbReference>
<dbReference type="SUPFAM" id="SSF57850">
    <property type="entry name" value="RING/U-box"/>
    <property type="match status" value="1"/>
</dbReference>
<dbReference type="PROSITE" id="PS50089">
    <property type="entry name" value="ZF_RING_2"/>
    <property type="match status" value="1"/>
</dbReference>
<gene>
    <name type="primary">AIP2</name>
    <name type="ordered locus">At5g20910</name>
    <name type="ORF">F22D1.80</name>
</gene>
<evidence type="ECO:0000255" key="1"/>
<evidence type="ECO:0000255" key="2">
    <source>
        <dbReference type="PROSITE-ProRule" id="PRU00175"/>
    </source>
</evidence>
<evidence type="ECO:0000256" key="3">
    <source>
        <dbReference type="SAM" id="MobiDB-lite"/>
    </source>
</evidence>
<evidence type="ECO:0000269" key="4">
    <source>
    </source>
</evidence>
<evidence type="ECO:0000269" key="5">
    <source>
    </source>
</evidence>
<evidence type="ECO:0000269" key="6">
    <source>
    </source>
</evidence>
<evidence type="ECO:0000305" key="7"/>
<accession>Q8RXD3</accession>
<accession>Q9M4B6</accession>
<proteinExistence type="evidence at protein level"/>